<proteinExistence type="inferred from homology"/>
<organism>
    <name type="scientific">Exiguobacterium sp. (strain ATCC BAA-1283 / AT1b)</name>
    <dbReference type="NCBI Taxonomy" id="360911"/>
    <lineage>
        <taxon>Bacteria</taxon>
        <taxon>Bacillati</taxon>
        <taxon>Bacillota</taxon>
        <taxon>Bacilli</taxon>
        <taxon>Bacillales</taxon>
        <taxon>Bacillales Family XII. Incertae Sedis</taxon>
        <taxon>Exiguobacterium</taxon>
    </lineage>
</organism>
<gene>
    <name evidence="2" type="primary">tuf</name>
    <name type="ordered locus">EAT1b_1636</name>
</gene>
<accession>C4KZP9</accession>
<reference key="1">
    <citation type="journal article" date="2011" name="J. Bacteriol.">
        <title>Complete genome sequence of the Thermophilic Bacterium Exiguobacterium sp. AT1b.</title>
        <authorList>
            <person name="Vishnivetskaya T.A."/>
            <person name="Lucas S."/>
            <person name="Copeland A."/>
            <person name="Lapidus A."/>
            <person name="Glavina del Rio T."/>
            <person name="Dalin E."/>
            <person name="Tice H."/>
            <person name="Bruce D.C."/>
            <person name="Goodwin L.A."/>
            <person name="Pitluck S."/>
            <person name="Saunders E."/>
            <person name="Brettin T."/>
            <person name="Detter C."/>
            <person name="Han C."/>
            <person name="Larimer F."/>
            <person name="Land M.L."/>
            <person name="Hauser L.J."/>
            <person name="Kyrpides N.C."/>
            <person name="Ovchinnikova G."/>
            <person name="Kathariou S."/>
            <person name="Ramaley R.F."/>
            <person name="Rodrigues D.F."/>
            <person name="Hendrix C."/>
            <person name="Richardson P."/>
            <person name="Tiedje J.M."/>
        </authorList>
    </citation>
    <scope>NUCLEOTIDE SEQUENCE [LARGE SCALE GENOMIC DNA]</scope>
    <source>
        <strain>ATCC BAA-1283 / AT1b</strain>
    </source>
</reference>
<protein>
    <recommendedName>
        <fullName evidence="2">Elongation factor Tu</fullName>
        <shortName evidence="2">EF-Tu</shortName>
        <ecNumber evidence="2">3.6.5.3</ecNumber>
    </recommendedName>
</protein>
<keyword id="KW-0963">Cytoplasm</keyword>
<keyword id="KW-0251">Elongation factor</keyword>
<keyword id="KW-0342">GTP-binding</keyword>
<keyword id="KW-0378">Hydrolase</keyword>
<keyword id="KW-0460">Magnesium</keyword>
<keyword id="KW-0479">Metal-binding</keyword>
<keyword id="KW-0547">Nucleotide-binding</keyword>
<keyword id="KW-0648">Protein biosynthesis</keyword>
<name>EFTU_EXISA</name>
<comment type="function">
    <text evidence="2">GTP hydrolase that promotes the GTP-dependent binding of aminoacyl-tRNA to the A-site of ribosomes during protein biosynthesis.</text>
</comment>
<comment type="catalytic activity">
    <reaction evidence="2">
        <text>GTP + H2O = GDP + phosphate + H(+)</text>
        <dbReference type="Rhea" id="RHEA:19669"/>
        <dbReference type="ChEBI" id="CHEBI:15377"/>
        <dbReference type="ChEBI" id="CHEBI:15378"/>
        <dbReference type="ChEBI" id="CHEBI:37565"/>
        <dbReference type="ChEBI" id="CHEBI:43474"/>
        <dbReference type="ChEBI" id="CHEBI:58189"/>
        <dbReference type="EC" id="3.6.5.3"/>
    </reaction>
    <physiologicalReaction direction="left-to-right" evidence="2">
        <dbReference type="Rhea" id="RHEA:19670"/>
    </physiologicalReaction>
</comment>
<comment type="subunit">
    <text evidence="2">Monomer.</text>
</comment>
<comment type="subcellular location">
    <subcellularLocation>
        <location evidence="2">Cytoplasm</location>
    </subcellularLocation>
</comment>
<comment type="similarity">
    <text evidence="2">Belongs to the TRAFAC class translation factor GTPase superfamily. Classic translation factor GTPase family. EF-Tu/EF-1A subfamily.</text>
</comment>
<dbReference type="EC" id="3.6.5.3" evidence="2"/>
<dbReference type="EMBL" id="CP001615">
    <property type="protein sequence ID" value="ACQ70562.1"/>
    <property type="molecule type" value="Genomic_DNA"/>
</dbReference>
<dbReference type="RefSeq" id="WP_012727680.1">
    <property type="nucleotide sequence ID" value="NC_012673.1"/>
</dbReference>
<dbReference type="SMR" id="C4KZP9"/>
<dbReference type="STRING" id="360911.EAT1b_1636"/>
<dbReference type="KEGG" id="eat:EAT1b_1636"/>
<dbReference type="eggNOG" id="COG0050">
    <property type="taxonomic scope" value="Bacteria"/>
</dbReference>
<dbReference type="HOGENOM" id="CLU_007265_0_1_9"/>
<dbReference type="OrthoDB" id="9804504at2"/>
<dbReference type="Proteomes" id="UP000000716">
    <property type="component" value="Chromosome"/>
</dbReference>
<dbReference type="GO" id="GO:0005829">
    <property type="term" value="C:cytosol"/>
    <property type="evidence" value="ECO:0007669"/>
    <property type="project" value="TreeGrafter"/>
</dbReference>
<dbReference type="GO" id="GO:0005525">
    <property type="term" value="F:GTP binding"/>
    <property type="evidence" value="ECO:0007669"/>
    <property type="project" value="UniProtKB-UniRule"/>
</dbReference>
<dbReference type="GO" id="GO:0003924">
    <property type="term" value="F:GTPase activity"/>
    <property type="evidence" value="ECO:0007669"/>
    <property type="project" value="InterPro"/>
</dbReference>
<dbReference type="GO" id="GO:0003746">
    <property type="term" value="F:translation elongation factor activity"/>
    <property type="evidence" value="ECO:0007669"/>
    <property type="project" value="UniProtKB-UniRule"/>
</dbReference>
<dbReference type="CDD" id="cd01884">
    <property type="entry name" value="EF_Tu"/>
    <property type="match status" value="1"/>
</dbReference>
<dbReference type="CDD" id="cd03697">
    <property type="entry name" value="EFTU_II"/>
    <property type="match status" value="1"/>
</dbReference>
<dbReference type="CDD" id="cd03707">
    <property type="entry name" value="EFTU_III"/>
    <property type="match status" value="1"/>
</dbReference>
<dbReference type="FunFam" id="2.40.30.10:FF:000001">
    <property type="entry name" value="Elongation factor Tu"/>
    <property type="match status" value="1"/>
</dbReference>
<dbReference type="FunFam" id="3.40.50.300:FF:000003">
    <property type="entry name" value="Elongation factor Tu"/>
    <property type="match status" value="1"/>
</dbReference>
<dbReference type="Gene3D" id="3.40.50.300">
    <property type="entry name" value="P-loop containing nucleotide triphosphate hydrolases"/>
    <property type="match status" value="1"/>
</dbReference>
<dbReference type="Gene3D" id="2.40.30.10">
    <property type="entry name" value="Translation factors"/>
    <property type="match status" value="2"/>
</dbReference>
<dbReference type="HAMAP" id="MF_00118_B">
    <property type="entry name" value="EF_Tu_B"/>
    <property type="match status" value="1"/>
</dbReference>
<dbReference type="InterPro" id="IPR041709">
    <property type="entry name" value="EF-Tu_GTP-bd"/>
</dbReference>
<dbReference type="InterPro" id="IPR050055">
    <property type="entry name" value="EF-Tu_GTPase"/>
</dbReference>
<dbReference type="InterPro" id="IPR004161">
    <property type="entry name" value="EFTu-like_2"/>
</dbReference>
<dbReference type="InterPro" id="IPR033720">
    <property type="entry name" value="EFTU_2"/>
</dbReference>
<dbReference type="InterPro" id="IPR031157">
    <property type="entry name" value="G_TR_CS"/>
</dbReference>
<dbReference type="InterPro" id="IPR027417">
    <property type="entry name" value="P-loop_NTPase"/>
</dbReference>
<dbReference type="InterPro" id="IPR005225">
    <property type="entry name" value="Small_GTP-bd"/>
</dbReference>
<dbReference type="InterPro" id="IPR000795">
    <property type="entry name" value="T_Tr_GTP-bd_dom"/>
</dbReference>
<dbReference type="InterPro" id="IPR009000">
    <property type="entry name" value="Transl_B-barrel_sf"/>
</dbReference>
<dbReference type="InterPro" id="IPR009001">
    <property type="entry name" value="Transl_elong_EF1A/Init_IF2_C"/>
</dbReference>
<dbReference type="InterPro" id="IPR004541">
    <property type="entry name" value="Transl_elong_EFTu/EF1A_bac/org"/>
</dbReference>
<dbReference type="InterPro" id="IPR004160">
    <property type="entry name" value="Transl_elong_EFTu/EF1A_C"/>
</dbReference>
<dbReference type="NCBIfam" id="TIGR00485">
    <property type="entry name" value="EF-Tu"/>
    <property type="match status" value="1"/>
</dbReference>
<dbReference type="NCBIfam" id="NF000766">
    <property type="entry name" value="PRK00049.1"/>
    <property type="match status" value="1"/>
</dbReference>
<dbReference type="NCBIfam" id="NF009372">
    <property type="entry name" value="PRK12735.1"/>
    <property type="match status" value="1"/>
</dbReference>
<dbReference type="NCBIfam" id="NF009373">
    <property type="entry name" value="PRK12736.1"/>
    <property type="match status" value="1"/>
</dbReference>
<dbReference type="NCBIfam" id="TIGR00231">
    <property type="entry name" value="small_GTP"/>
    <property type="match status" value="1"/>
</dbReference>
<dbReference type="PANTHER" id="PTHR43721:SF22">
    <property type="entry name" value="ELONGATION FACTOR TU, MITOCHONDRIAL"/>
    <property type="match status" value="1"/>
</dbReference>
<dbReference type="PANTHER" id="PTHR43721">
    <property type="entry name" value="ELONGATION FACTOR TU-RELATED"/>
    <property type="match status" value="1"/>
</dbReference>
<dbReference type="Pfam" id="PF00009">
    <property type="entry name" value="GTP_EFTU"/>
    <property type="match status" value="1"/>
</dbReference>
<dbReference type="Pfam" id="PF03144">
    <property type="entry name" value="GTP_EFTU_D2"/>
    <property type="match status" value="1"/>
</dbReference>
<dbReference type="Pfam" id="PF03143">
    <property type="entry name" value="GTP_EFTU_D3"/>
    <property type="match status" value="1"/>
</dbReference>
<dbReference type="PRINTS" id="PR00315">
    <property type="entry name" value="ELONGATNFCT"/>
</dbReference>
<dbReference type="SUPFAM" id="SSF50465">
    <property type="entry name" value="EF-Tu/eEF-1alpha/eIF2-gamma C-terminal domain"/>
    <property type="match status" value="1"/>
</dbReference>
<dbReference type="SUPFAM" id="SSF52540">
    <property type="entry name" value="P-loop containing nucleoside triphosphate hydrolases"/>
    <property type="match status" value="1"/>
</dbReference>
<dbReference type="SUPFAM" id="SSF50447">
    <property type="entry name" value="Translation proteins"/>
    <property type="match status" value="1"/>
</dbReference>
<dbReference type="PROSITE" id="PS00301">
    <property type="entry name" value="G_TR_1"/>
    <property type="match status" value="1"/>
</dbReference>
<dbReference type="PROSITE" id="PS51722">
    <property type="entry name" value="G_TR_2"/>
    <property type="match status" value="1"/>
</dbReference>
<sequence>MGKEKFDRSKPHVNVGTIGHVDHGKTTLTAAISAVLSKAQGKAATKFDQIDGAPEERERGITIATAHIEYETDKRHYAHVDCPGHADYVKNMITGAAQMDGAILVVSATDGPMPQTREHILLSRQVGVPYIVVFMNKVDMVDDEELLELVEMEIRELLSEYDFPGDDLPVIKGSALGALNGEAQWEEKVMELMNAVDEYIPEPVRDTEKDFMMPVEDVFSITGRGTVATGRVERGVLRVNDEIEIVGLTEETKKTVCTGVEMFRKLLDYAEAGDNIGALLRGVSRDDIERGQVLAKPGSITPHSKFKASIYVLSKEEGGRHTPFFANYRPQFYFRTTDVTGIVHLPEGTEMVMPGDNIELTIELISTIAIEDGTRFSIREGGRTVGAGSVTEIIE</sequence>
<feature type="chain" id="PRO_1000203010" description="Elongation factor Tu">
    <location>
        <begin position="1"/>
        <end position="395"/>
    </location>
</feature>
<feature type="domain" description="tr-type G">
    <location>
        <begin position="10"/>
        <end position="204"/>
    </location>
</feature>
<feature type="region of interest" description="G1" evidence="1">
    <location>
        <begin position="19"/>
        <end position="26"/>
    </location>
</feature>
<feature type="region of interest" description="G2" evidence="1">
    <location>
        <begin position="60"/>
        <end position="64"/>
    </location>
</feature>
<feature type="region of interest" description="G3" evidence="1">
    <location>
        <begin position="81"/>
        <end position="84"/>
    </location>
</feature>
<feature type="region of interest" description="G4" evidence="1">
    <location>
        <begin position="136"/>
        <end position="139"/>
    </location>
</feature>
<feature type="region of interest" description="G5" evidence="1">
    <location>
        <begin position="174"/>
        <end position="176"/>
    </location>
</feature>
<feature type="binding site" evidence="2">
    <location>
        <begin position="19"/>
        <end position="26"/>
    </location>
    <ligand>
        <name>GTP</name>
        <dbReference type="ChEBI" id="CHEBI:37565"/>
    </ligand>
</feature>
<feature type="binding site" evidence="2">
    <location>
        <position position="26"/>
    </location>
    <ligand>
        <name>Mg(2+)</name>
        <dbReference type="ChEBI" id="CHEBI:18420"/>
    </ligand>
</feature>
<feature type="binding site" evidence="2">
    <location>
        <begin position="81"/>
        <end position="85"/>
    </location>
    <ligand>
        <name>GTP</name>
        <dbReference type="ChEBI" id="CHEBI:37565"/>
    </ligand>
</feature>
<feature type="binding site" evidence="2">
    <location>
        <begin position="136"/>
        <end position="139"/>
    </location>
    <ligand>
        <name>GTP</name>
        <dbReference type="ChEBI" id="CHEBI:37565"/>
    </ligand>
</feature>
<evidence type="ECO:0000250" key="1"/>
<evidence type="ECO:0000255" key="2">
    <source>
        <dbReference type="HAMAP-Rule" id="MF_00118"/>
    </source>
</evidence>